<comment type="function">
    <text evidence="1">Catalyzes the isomerization between 2-isopropylmalate and 3-isopropylmalate, via the formation of 2-isopropylmaleate.</text>
</comment>
<comment type="catalytic activity">
    <reaction evidence="1">
        <text>(2R,3S)-3-isopropylmalate = (2S)-2-isopropylmalate</text>
        <dbReference type="Rhea" id="RHEA:32287"/>
        <dbReference type="ChEBI" id="CHEBI:1178"/>
        <dbReference type="ChEBI" id="CHEBI:35121"/>
        <dbReference type="EC" id="4.2.1.33"/>
    </reaction>
</comment>
<comment type="cofactor">
    <cofactor evidence="1">
        <name>[4Fe-4S] cluster</name>
        <dbReference type="ChEBI" id="CHEBI:49883"/>
    </cofactor>
    <text evidence="1">Binds 1 [4Fe-4S] cluster per subunit.</text>
</comment>
<comment type="pathway">
    <text evidence="1">Amino-acid biosynthesis; L-leucine biosynthesis; L-leucine from 3-methyl-2-oxobutanoate: step 2/4.</text>
</comment>
<comment type="subunit">
    <text evidence="1">Heterodimer of LeuC and LeuD.</text>
</comment>
<comment type="similarity">
    <text evidence="1">Belongs to the aconitase/IPM isomerase family. LeuC type 1 subfamily.</text>
</comment>
<proteinExistence type="inferred from homology"/>
<protein>
    <recommendedName>
        <fullName evidence="1">3-isopropylmalate dehydratase large subunit</fullName>
        <ecNumber evidence="1">4.2.1.33</ecNumber>
    </recommendedName>
    <alternativeName>
        <fullName evidence="1">Alpha-IPM isomerase</fullName>
        <shortName evidence="1">IPMI</shortName>
    </alternativeName>
    <alternativeName>
        <fullName evidence="1">Isopropylmalate isomerase</fullName>
    </alternativeName>
</protein>
<accession>Q32K22</accession>
<reference key="1">
    <citation type="journal article" date="2005" name="Nucleic Acids Res.">
        <title>Genome dynamics and diversity of Shigella species, the etiologic agents of bacillary dysentery.</title>
        <authorList>
            <person name="Yang F."/>
            <person name="Yang J."/>
            <person name="Zhang X."/>
            <person name="Chen L."/>
            <person name="Jiang Y."/>
            <person name="Yan Y."/>
            <person name="Tang X."/>
            <person name="Wang J."/>
            <person name="Xiong Z."/>
            <person name="Dong J."/>
            <person name="Xue Y."/>
            <person name="Zhu Y."/>
            <person name="Xu X."/>
            <person name="Sun L."/>
            <person name="Chen S."/>
            <person name="Nie H."/>
            <person name="Peng J."/>
            <person name="Xu J."/>
            <person name="Wang Y."/>
            <person name="Yuan Z."/>
            <person name="Wen Y."/>
            <person name="Yao Z."/>
            <person name="Shen Y."/>
            <person name="Qiang B."/>
            <person name="Hou Y."/>
            <person name="Yu J."/>
            <person name="Jin Q."/>
        </authorList>
    </citation>
    <scope>NUCLEOTIDE SEQUENCE [LARGE SCALE GENOMIC DNA]</scope>
    <source>
        <strain>Sd197</strain>
    </source>
</reference>
<sequence length="466" mass="49938">MAKTLYEKLFDTHVVYEAENETPLLYIDRHLVHEVTSPQAFDGLRAHGRPVRQPGKTFATMDHNVSTQTKDINACGEMARIQMQELIKNCKEFGVELYDLNHPYQGIVHVMGPEQGVTLPGMTIVCGDSHTATHGAFGALAFGIGTSEVEHVLATQTLKQGRAKTMKIEVQGKAAPGITAKDIVLAIIGKTGSAGGTGHVVEFCGEAIRDLSMEGRMTLCNMAIEMGAKAGLVAPDETTFNYVKGRLHAPKGKDFDDAVAYWKTLQTDEGATFDTVVTLQAEEISPQVTWGTNPGQVISVNDNIPDPASFADPVERALAEKALAYMGLKPGIPLTEVAIDKVFIGSCTNSRIEDLRAAAEIAKGRKVAPGVQALVVPGSGPVKAQAEAEGLDKIFIEAGFEWRLPGCSMCLAMNNDRLNPGERCASTSNRNFEGRQGRGGRTHLVSPAMAAAAAVTGHFADIRNIK</sequence>
<feature type="chain" id="PRO_0000076807" description="3-isopropylmalate dehydratase large subunit">
    <location>
        <begin position="1"/>
        <end position="466"/>
    </location>
</feature>
<feature type="binding site" evidence="1">
    <location>
        <position position="347"/>
    </location>
    <ligand>
        <name>[4Fe-4S] cluster</name>
        <dbReference type="ChEBI" id="CHEBI:49883"/>
    </ligand>
</feature>
<feature type="binding site" evidence="1">
    <location>
        <position position="407"/>
    </location>
    <ligand>
        <name>[4Fe-4S] cluster</name>
        <dbReference type="ChEBI" id="CHEBI:49883"/>
    </ligand>
</feature>
<feature type="binding site" evidence="1">
    <location>
        <position position="410"/>
    </location>
    <ligand>
        <name>[4Fe-4S] cluster</name>
        <dbReference type="ChEBI" id="CHEBI:49883"/>
    </ligand>
</feature>
<keyword id="KW-0004">4Fe-4S</keyword>
<keyword id="KW-0028">Amino-acid biosynthesis</keyword>
<keyword id="KW-0100">Branched-chain amino acid biosynthesis</keyword>
<keyword id="KW-0408">Iron</keyword>
<keyword id="KW-0411">Iron-sulfur</keyword>
<keyword id="KW-0432">Leucine biosynthesis</keyword>
<keyword id="KW-0456">Lyase</keyword>
<keyword id="KW-0479">Metal-binding</keyword>
<keyword id="KW-1185">Reference proteome</keyword>
<dbReference type="EC" id="4.2.1.33" evidence="1"/>
<dbReference type="EMBL" id="CP000034">
    <property type="protein sequence ID" value="ABB60335.1"/>
    <property type="molecule type" value="Genomic_DNA"/>
</dbReference>
<dbReference type="RefSeq" id="WP_001140684.1">
    <property type="nucleotide sequence ID" value="NC_007606.1"/>
</dbReference>
<dbReference type="RefSeq" id="YP_401824.1">
    <property type="nucleotide sequence ID" value="NC_007606.1"/>
</dbReference>
<dbReference type="SMR" id="Q32K22"/>
<dbReference type="STRING" id="300267.SDY_0099"/>
<dbReference type="EnsemblBacteria" id="ABB60335">
    <property type="protein sequence ID" value="ABB60335"/>
    <property type="gene ID" value="SDY_0099"/>
</dbReference>
<dbReference type="KEGG" id="sdy:SDY_0099"/>
<dbReference type="PATRIC" id="fig|300267.13.peg.118"/>
<dbReference type="HOGENOM" id="CLU_006714_3_4_6"/>
<dbReference type="UniPathway" id="UPA00048">
    <property type="reaction ID" value="UER00071"/>
</dbReference>
<dbReference type="Proteomes" id="UP000002716">
    <property type="component" value="Chromosome"/>
</dbReference>
<dbReference type="GO" id="GO:0003861">
    <property type="term" value="F:3-isopropylmalate dehydratase activity"/>
    <property type="evidence" value="ECO:0007669"/>
    <property type="project" value="UniProtKB-UniRule"/>
</dbReference>
<dbReference type="GO" id="GO:0051539">
    <property type="term" value="F:4 iron, 4 sulfur cluster binding"/>
    <property type="evidence" value="ECO:0007669"/>
    <property type="project" value="UniProtKB-KW"/>
</dbReference>
<dbReference type="GO" id="GO:0046872">
    <property type="term" value="F:metal ion binding"/>
    <property type="evidence" value="ECO:0007669"/>
    <property type="project" value="UniProtKB-KW"/>
</dbReference>
<dbReference type="GO" id="GO:0009098">
    <property type="term" value="P:L-leucine biosynthetic process"/>
    <property type="evidence" value="ECO:0007669"/>
    <property type="project" value="UniProtKB-UniRule"/>
</dbReference>
<dbReference type="CDD" id="cd01583">
    <property type="entry name" value="IPMI"/>
    <property type="match status" value="1"/>
</dbReference>
<dbReference type="FunFam" id="3.30.499.10:FF:000006">
    <property type="entry name" value="3-isopropylmalate dehydratase large subunit"/>
    <property type="match status" value="1"/>
</dbReference>
<dbReference type="FunFam" id="3.30.499.10:FF:000007">
    <property type="entry name" value="3-isopropylmalate dehydratase large subunit"/>
    <property type="match status" value="1"/>
</dbReference>
<dbReference type="Gene3D" id="3.30.499.10">
    <property type="entry name" value="Aconitase, domain 3"/>
    <property type="match status" value="2"/>
</dbReference>
<dbReference type="HAMAP" id="MF_01026">
    <property type="entry name" value="LeuC_type1"/>
    <property type="match status" value="1"/>
</dbReference>
<dbReference type="InterPro" id="IPR004430">
    <property type="entry name" value="3-IsopropMal_deHydase_lsu"/>
</dbReference>
<dbReference type="InterPro" id="IPR015931">
    <property type="entry name" value="Acnase/IPM_dHydase_lsu_aba_1/3"/>
</dbReference>
<dbReference type="InterPro" id="IPR001030">
    <property type="entry name" value="Acoase/IPM_deHydtase_lsu_aba"/>
</dbReference>
<dbReference type="InterPro" id="IPR018136">
    <property type="entry name" value="Aconitase_4Fe-4S_BS"/>
</dbReference>
<dbReference type="InterPro" id="IPR036008">
    <property type="entry name" value="Aconitase_4Fe-4S_dom"/>
</dbReference>
<dbReference type="InterPro" id="IPR050067">
    <property type="entry name" value="IPM_dehydratase_rel_enz"/>
</dbReference>
<dbReference type="InterPro" id="IPR033941">
    <property type="entry name" value="IPMI_cat"/>
</dbReference>
<dbReference type="NCBIfam" id="TIGR00170">
    <property type="entry name" value="leuC"/>
    <property type="match status" value="1"/>
</dbReference>
<dbReference type="NCBIfam" id="NF004016">
    <property type="entry name" value="PRK05478.1"/>
    <property type="match status" value="1"/>
</dbReference>
<dbReference type="NCBIfam" id="NF009116">
    <property type="entry name" value="PRK12466.1"/>
    <property type="match status" value="1"/>
</dbReference>
<dbReference type="PANTHER" id="PTHR43822:SF9">
    <property type="entry name" value="3-ISOPROPYLMALATE DEHYDRATASE"/>
    <property type="match status" value="1"/>
</dbReference>
<dbReference type="PANTHER" id="PTHR43822">
    <property type="entry name" value="HOMOACONITASE, MITOCHONDRIAL-RELATED"/>
    <property type="match status" value="1"/>
</dbReference>
<dbReference type="Pfam" id="PF00330">
    <property type="entry name" value="Aconitase"/>
    <property type="match status" value="1"/>
</dbReference>
<dbReference type="PRINTS" id="PR00415">
    <property type="entry name" value="ACONITASE"/>
</dbReference>
<dbReference type="SUPFAM" id="SSF53732">
    <property type="entry name" value="Aconitase iron-sulfur domain"/>
    <property type="match status" value="1"/>
</dbReference>
<dbReference type="PROSITE" id="PS00450">
    <property type="entry name" value="ACONITASE_1"/>
    <property type="match status" value="1"/>
</dbReference>
<dbReference type="PROSITE" id="PS01244">
    <property type="entry name" value="ACONITASE_2"/>
    <property type="match status" value="1"/>
</dbReference>
<name>LEUC_SHIDS</name>
<organism>
    <name type="scientific">Shigella dysenteriae serotype 1 (strain Sd197)</name>
    <dbReference type="NCBI Taxonomy" id="300267"/>
    <lineage>
        <taxon>Bacteria</taxon>
        <taxon>Pseudomonadati</taxon>
        <taxon>Pseudomonadota</taxon>
        <taxon>Gammaproteobacteria</taxon>
        <taxon>Enterobacterales</taxon>
        <taxon>Enterobacteriaceae</taxon>
        <taxon>Shigella</taxon>
    </lineage>
</organism>
<gene>
    <name evidence="1" type="primary">leuC</name>
    <name type="ordered locus">SDY_0099</name>
</gene>
<evidence type="ECO:0000255" key="1">
    <source>
        <dbReference type="HAMAP-Rule" id="MF_01026"/>
    </source>
</evidence>